<proteinExistence type="inferred from homology"/>
<evidence type="ECO:0000255" key="1">
    <source>
        <dbReference type="HAMAP-Rule" id="MF_01000"/>
    </source>
</evidence>
<accession>Q5PD47</accession>
<keyword id="KW-1015">Disulfide bond</keyword>
<keyword id="KW-0574">Periplasm</keyword>
<keyword id="KW-0732">Signal</keyword>
<keyword id="KW-0813">Transport</keyword>
<organism>
    <name type="scientific">Salmonella paratyphi A (strain ATCC 9150 / SARB42)</name>
    <dbReference type="NCBI Taxonomy" id="295319"/>
    <lineage>
        <taxon>Bacteria</taxon>
        <taxon>Pseudomonadati</taxon>
        <taxon>Pseudomonadota</taxon>
        <taxon>Gammaproteobacteria</taxon>
        <taxon>Enterobacterales</taxon>
        <taxon>Enterobacteriaceae</taxon>
        <taxon>Salmonella</taxon>
    </lineage>
</organism>
<gene>
    <name evidence="1" type="primary">btuF</name>
    <name type="ordered locus">SPA0212</name>
</gene>
<protein>
    <recommendedName>
        <fullName evidence="1">Vitamin B12-binding protein</fullName>
    </recommendedName>
</protein>
<sequence>MAKQMFRALVALLLTLPVWLYAAPRVITLSPANTELAFAAGITPVGVSSYSDYPPEAQKIEQVSTWQGMNLERIVALKPDLVVAWRGGNAERQVNQLTSLGIKVMWVDAVSIEQIADALRQLAVWSPQPEKAQQAAQTLLNEYAALKVEYAGKAKKRVFLQFGMNPLFTSGKGSIQHQVLTTCGGENIFADSRVPWPQVSREQVLARHPQAIIVAGKAGEILKIEQYWGNLLKIPVIPLNSDWFERASPRIILAAKQLCNALSQVN</sequence>
<feature type="signal peptide" evidence="1">
    <location>
        <begin position="1"/>
        <end position="22"/>
    </location>
</feature>
<feature type="chain" id="PRO_0000003504" description="Vitamin B12-binding protein">
    <location>
        <begin position="23"/>
        <end position="266"/>
    </location>
</feature>
<feature type="domain" description="Fe/B12 periplasmic-binding" evidence="1">
    <location>
        <begin position="25"/>
        <end position="266"/>
    </location>
</feature>
<feature type="binding site" evidence="1">
    <location>
        <position position="50"/>
    </location>
    <ligand>
        <name>cyanocob(III)alamin</name>
        <dbReference type="ChEBI" id="CHEBI:17439"/>
    </ligand>
</feature>
<feature type="binding site" evidence="1">
    <location>
        <begin position="242"/>
        <end position="246"/>
    </location>
    <ligand>
        <name>cyanocob(III)alamin</name>
        <dbReference type="ChEBI" id="CHEBI:17439"/>
    </ligand>
</feature>
<feature type="site" description="Important for BtuC binding" evidence="1">
    <location>
        <position position="72"/>
    </location>
</feature>
<feature type="site" description="Important for BtuC binding" evidence="1">
    <location>
        <position position="202"/>
    </location>
</feature>
<feature type="disulfide bond" evidence="1">
    <location>
        <begin position="183"/>
        <end position="259"/>
    </location>
</feature>
<reference key="1">
    <citation type="journal article" date="2004" name="Nat. Genet.">
        <title>Comparison of genome degradation in Paratyphi A and Typhi, human-restricted serovars of Salmonella enterica that cause typhoid.</title>
        <authorList>
            <person name="McClelland M."/>
            <person name="Sanderson K.E."/>
            <person name="Clifton S.W."/>
            <person name="Latreille P."/>
            <person name="Porwollik S."/>
            <person name="Sabo A."/>
            <person name="Meyer R."/>
            <person name="Bieri T."/>
            <person name="Ozersky P."/>
            <person name="McLellan M."/>
            <person name="Harkins C.R."/>
            <person name="Wang C."/>
            <person name="Nguyen C."/>
            <person name="Berghoff A."/>
            <person name="Elliott G."/>
            <person name="Kohlberg S."/>
            <person name="Strong C."/>
            <person name="Du F."/>
            <person name="Carter J."/>
            <person name="Kremizki C."/>
            <person name="Layman D."/>
            <person name="Leonard S."/>
            <person name="Sun H."/>
            <person name="Fulton L."/>
            <person name="Nash W."/>
            <person name="Miner T."/>
            <person name="Minx P."/>
            <person name="Delehaunty K."/>
            <person name="Fronick C."/>
            <person name="Magrini V."/>
            <person name="Nhan M."/>
            <person name="Warren W."/>
            <person name="Florea L."/>
            <person name="Spieth J."/>
            <person name="Wilson R.K."/>
        </authorList>
    </citation>
    <scope>NUCLEOTIDE SEQUENCE [LARGE SCALE GENOMIC DNA]</scope>
    <source>
        <strain>ATCC 9150 / SARB42</strain>
    </source>
</reference>
<dbReference type="EMBL" id="CP000026">
    <property type="protein sequence ID" value="AAV76242.1"/>
    <property type="molecule type" value="Genomic_DNA"/>
</dbReference>
<dbReference type="RefSeq" id="WP_001118837.1">
    <property type="nucleotide sequence ID" value="NC_006511.1"/>
</dbReference>
<dbReference type="SMR" id="Q5PD47"/>
<dbReference type="KEGG" id="spt:SPA0212"/>
<dbReference type="HOGENOM" id="CLU_038034_2_5_6"/>
<dbReference type="Proteomes" id="UP000008185">
    <property type="component" value="Chromosome"/>
</dbReference>
<dbReference type="GO" id="GO:0042597">
    <property type="term" value="C:periplasmic space"/>
    <property type="evidence" value="ECO:0007669"/>
    <property type="project" value="UniProtKB-SubCell"/>
</dbReference>
<dbReference type="GO" id="GO:0031419">
    <property type="term" value="F:cobalamin binding"/>
    <property type="evidence" value="ECO:0007669"/>
    <property type="project" value="InterPro"/>
</dbReference>
<dbReference type="GO" id="GO:0015889">
    <property type="term" value="P:cobalamin transport"/>
    <property type="evidence" value="ECO:0007669"/>
    <property type="project" value="UniProtKB-UniRule"/>
</dbReference>
<dbReference type="CDD" id="cd01144">
    <property type="entry name" value="BtuF"/>
    <property type="match status" value="1"/>
</dbReference>
<dbReference type="Gene3D" id="3.40.50.1980">
    <property type="entry name" value="Nitrogenase molybdenum iron protein domain"/>
    <property type="match status" value="2"/>
</dbReference>
<dbReference type="HAMAP" id="MF_01000">
    <property type="entry name" value="BtuF"/>
    <property type="match status" value="1"/>
</dbReference>
<dbReference type="InterPro" id="IPR050902">
    <property type="entry name" value="ABC_Transporter_SBP"/>
</dbReference>
<dbReference type="InterPro" id="IPR002491">
    <property type="entry name" value="ABC_transptr_periplasmic_BD"/>
</dbReference>
<dbReference type="InterPro" id="IPR023544">
    <property type="entry name" value="ABC_transptr_vit_B12-bd"/>
</dbReference>
<dbReference type="InterPro" id="IPR054828">
    <property type="entry name" value="Vit_B12_bind_prot"/>
</dbReference>
<dbReference type="NCBIfam" id="NF002894">
    <property type="entry name" value="PRK03379.1"/>
    <property type="match status" value="1"/>
</dbReference>
<dbReference type="NCBIfam" id="NF038402">
    <property type="entry name" value="TroA_like"/>
    <property type="match status" value="1"/>
</dbReference>
<dbReference type="PANTHER" id="PTHR30535:SF34">
    <property type="entry name" value="MOLYBDATE-BINDING PROTEIN MOLA"/>
    <property type="match status" value="1"/>
</dbReference>
<dbReference type="PANTHER" id="PTHR30535">
    <property type="entry name" value="VITAMIN B12-BINDING PROTEIN"/>
    <property type="match status" value="1"/>
</dbReference>
<dbReference type="Pfam" id="PF01497">
    <property type="entry name" value="Peripla_BP_2"/>
    <property type="match status" value="1"/>
</dbReference>
<dbReference type="SUPFAM" id="SSF53807">
    <property type="entry name" value="Helical backbone' metal receptor"/>
    <property type="match status" value="1"/>
</dbReference>
<dbReference type="PROSITE" id="PS50983">
    <property type="entry name" value="FE_B12_PBP"/>
    <property type="match status" value="1"/>
</dbReference>
<name>BTUF_SALPA</name>
<comment type="function">
    <text evidence="1">Part of the ABC transporter complex BtuCDF involved in vitamin B12 import. Binds vitamin B12 and delivers it to the periplasmic surface of BtuC.</text>
</comment>
<comment type="subunit">
    <text evidence="1">The complex is composed of two ATP-binding proteins (BtuD), two transmembrane proteins (BtuC) and a solute-binding protein (BtuF).</text>
</comment>
<comment type="subcellular location">
    <subcellularLocation>
        <location evidence="1">Periplasm</location>
    </subcellularLocation>
</comment>
<comment type="similarity">
    <text evidence="1">Belongs to the BtuF family.</text>
</comment>